<organism>
    <name type="scientific">Mycoplasma capricolum subsp. capricolum (strain California kid / ATCC 27343 / NCTC 10154)</name>
    <dbReference type="NCBI Taxonomy" id="340047"/>
    <lineage>
        <taxon>Bacteria</taxon>
        <taxon>Bacillati</taxon>
        <taxon>Mycoplasmatota</taxon>
        <taxon>Mollicutes</taxon>
        <taxon>Mycoplasmataceae</taxon>
        <taxon>Mycoplasma</taxon>
    </lineage>
</organism>
<accession>Q2SSR3</accession>
<keyword id="KW-0963">Cytoplasm</keyword>
<keyword id="KW-0324">Glycolysis</keyword>
<keyword id="KW-0456">Lyase</keyword>
<keyword id="KW-0460">Magnesium</keyword>
<keyword id="KW-0479">Metal-binding</keyword>
<keyword id="KW-0964">Secreted</keyword>
<reference key="1">
    <citation type="submission" date="2005-09" db="EMBL/GenBank/DDBJ databases">
        <authorList>
            <person name="Glass J.I."/>
            <person name="Lartigue C."/>
            <person name="Pfannkoch C."/>
            <person name="Baden-Tillson H."/>
            <person name="Smith H.O."/>
            <person name="Venter J.C."/>
            <person name="Roske K."/>
            <person name="Wise K.S."/>
            <person name="Calcutt M.J."/>
            <person name="Nelson W.C."/>
            <person name="Nierman W.C."/>
        </authorList>
    </citation>
    <scope>NUCLEOTIDE SEQUENCE [LARGE SCALE GENOMIC DNA]</scope>
    <source>
        <strain>California kid / ATCC 27343 / NCTC 10154</strain>
    </source>
</reference>
<name>ENO_MYCCT</name>
<proteinExistence type="inferred from homology"/>
<protein>
    <recommendedName>
        <fullName evidence="1">Enolase</fullName>
        <ecNumber evidence="1">4.2.1.11</ecNumber>
    </recommendedName>
    <alternativeName>
        <fullName evidence="1">2-phospho-D-glycerate hydro-lyase</fullName>
    </alternativeName>
    <alternativeName>
        <fullName evidence="1">2-phosphoglycerate dehydratase</fullName>
    </alternativeName>
</protein>
<evidence type="ECO:0000255" key="1">
    <source>
        <dbReference type="HAMAP-Rule" id="MF_00318"/>
    </source>
</evidence>
<sequence>MSRIERIFAREILDSRGTPTVEVEVWTEFGGYGCAKAPSGASTGVNEALELRDGDKARYNGKGVLKAVKNVNEIIAPELIGIDALDQLTVDRKMLDLDGTEFKTKLGANGILAVSLAVAKAAASELDIPLYKYLGGVQAKKLPVPMLNVINGGEHADSAIDFQEFMIMPVGAKSFSEALRWSSETFQALKSLLKSKKDITAVGDEGGFAPNFEWAYEKHDLESFKKKTPAEIALDLLVDAIKKAGYKPGKDGIMIAMDCASSELYLEDKKYHFKKIEKVTNQEWSLTSDEMISYLEKLVNNYPIISIEDGLAETDWEGFTKLTQKIGDKVQIVGDDLFTTNPKFIKQGINKKAANSTLIKLNQIGTLSETVEAITMTQKAGWTAVVSHRSGETEDTTIADLAVAFNTGQIKTGSMSRSDRIAKYNRLLQIESELGQNAIYDGLEAFYNLNK</sequence>
<gene>
    <name evidence="1" type="primary">eno</name>
    <name type="ordered locus">MCAP_0213</name>
</gene>
<dbReference type="EC" id="4.2.1.11" evidence="1"/>
<dbReference type="EMBL" id="CP000123">
    <property type="protein sequence ID" value="ABC01346.1"/>
    <property type="molecule type" value="Genomic_DNA"/>
</dbReference>
<dbReference type="RefSeq" id="WP_011387101.1">
    <property type="nucleotide sequence ID" value="NC_007633.1"/>
</dbReference>
<dbReference type="SMR" id="Q2SSR3"/>
<dbReference type="GeneID" id="23778834"/>
<dbReference type="KEGG" id="mcp:MCAP_0213"/>
<dbReference type="HOGENOM" id="CLU_031223_2_1_14"/>
<dbReference type="PhylomeDB" id="Q2SSR3"/>
<dbReference type="UniPathway" id="UPA00109">
    <property type="reaction ID" value="UER00187"/>
</dbReference>
<dbReference type="Proteomes" id="UP000001928">
    <property type="component" value="Chromosome"/>
</dbReference>
<dbReference type="GO" id="GO:0009986">
    <property type="term" value="C:cell surface"/>
    <property type="evidence" value="ECO:0007669"/>
    <property type="project" value="UniProtKB-SubCell"/>
</dbReference>
<dbReference type="GO" id="GO:0005576">
    <property type="term" value="C:extracellular region"/>
    <property type="evidence" value="ECO:0007669"/>
    <property type="project" value="UniProtKB-SubCell"/>
</dbReference>
<dbReference type="GO" id="GO:0000015">
    <property type="term" value="C:phosphopyruvate hydratase complex"/>
    <property type="evidence" value="ECO:0007669"/>
    <property type="project" value="InterPro"/>
</dbReference>
<dbReference type="GO" id="GO:0000287">
    <property type="term" value="F:magnesium ion binding"/>
    <property type="evidence" value="ECO:0007669"/>
    <property type="project" value="UniProtKB-UniRule"/>
</dbReference>
<dbReference type="GO" id="GO:0004634">
    <property type="term" value="F:phosphopyruvate hydratase activity"/>
    <property type="evidence" value="ECO:0007669"/>
    <property type="project" value="UniProtKB-UniRule"/>
</dbReference>
<dbReference type="GO" id="GO:0006096">
    <property type="term" value="P:glycolytic process"/>
    <property type="evidence" value="ECO:0007669"/>
    <property type="project" value="UniProtKB-UniRule"/>
</dbReference>
<dbReference type="CDD" id="cd03313">
    <property type="entry name" value="enolase"/>
    <property type="match status" value="1"/>
</dbReference>
<dbReference type="FunFam" id="3.20.20.120:FF:000001">
    <property type="entry name" value="Enolase"/>
    <property type="match status" value="1"/>
</dbReference>
<dbReference type="FunFam" id="3.30.390.10:FF:000001">
    <property type="entry name" value="Enolase"/>
    <property type="match status" value="1"/>
</dbReference>
<dbReference type="Gene3D" id="3.20.20.120">
    <property type="entry name" value="Enolase-like C-terminal domain"/>
    <property type="match status" value="1"/>
</dbReference>
<dbReference type="Gene3D" id="3.30.390.10">
    <property type="entry name" value="Enolase-like, N-terminal domain"/>
    <property type="match status" value="1"/>
</dbReference>
<dbReference type="HAMAP" id="MF_00318">
    <property type="entry name" value="Enolase"/>
    <property type="match status" value="1"/>
</dbReference>
<dbReference type="InterPro" id="IPR000941">
    <property type="entry name" value="Enolase"/>
</dbReference>
<dbReference type="InterPro" id="IPR036849">
    <property type="entry name" value="Enolase-like_C_sf"/>
</dbReference>
<dbReference type="InterPro" id="IPR029017">
    <property type="entry name" value="Enolase-like_N"/>
</dbReference>
<dbReference type="InterPro" id="IPR020810">
    <property type="entry name" value="Enolase_C"/>
</dbReference>
<dbReference type="InterPro" id="IPR020809">
    <property type="entry name" value="Enolase_CS"/>
</dbReference>
<dbReference type="InterPro" id="IPR020811">
    <property type="entry name" value="Enolase_N"/>
</dbReference>
<dbReference type="NCBIfam" id="TIGR01060">
    <property type="entry name" value="eno"/>
    <property type="match status" value="1"/>
</dbReference>
<dbReference type="PANTHER" id="PTHR11902">
    <property type="entry name" value="ENOLASE"/>
    <property type="match status" value="1"/>
</dbReference>
<dbReference type="PANTHER" id="PTHR11902:SF1">
    <property type="entry name" value="ENOLASE"/>
    <property type="match status" value="1"/>
</dbReference>
<dbReference type="Pfam" id="PF00113">
    <property type="entry name" value="Enolase_C"/>
    <property type="match status" value="1"/>
</dbReference>
<dbReference type="Pfam" id="PF03952">
    <property type="entry name" value="Enolase_N"/>
    <property type="match status" value="1"/>
</dbReference>
<dbReference type="PIRSF" id="PIRSF001400">
    <property type="entry name" value="Enolase"/>
    <property type="match status" value="1"/>
</dbReference>
<dbReference type="PRINTS" id="PR00148">
    <property type="entry name" value="ENOLASE"/>
</dbReference>
<dbReference type="SFLD" id="SFLDS00001">
    <property type="entry name" value="Enolase"/>
    <property type="match status" value="1"/>
</dbReference>
<dbReference type="SFLD" id="SFLDF00002">
    <property type="entry name" value="enolase"/>
    <property type="match status" value="1"/>
</dbReference>
<dbReference type="SMART" id="SM01192">
    <property type="entry name" value="Enolase_C"/>
    <property type="match status" value="1"/>
</dbReference>
<dbReference type="SMART" id="SM01193">
    <property type="entry name" value="Enolase_N"/>
    <property type="match status" value="1"/>
</dbReference>
<dbReference type="SUPFAM" id="SSF51604">
    <property type="entry name" value="Enolase C-terminal domain-like"/>
    <property type="match status" value="1"/>
</dbReference>
<dbReference type="SUPFAM" id="SSF54826">
    <property type="entry name" value="Enolase N-terminal domain-like"/>
    <property type="match status" value="1"/>
</dbReference>
<dbReference type="PROSITE" id="PS00164">
    <property type="entry name" value="ENOLASE"/>
    <property type="match status" value="1"/>
</dbReference>
<comment type="function">
    <text evidence="1">Catalyzes the reversible conversion of 2-phosphoglycerate (2-PG) into phosphoenolpyruvate (PEP). It is essential for the degradation of carbohydrates via glycolysis.</text>
</comment>
<comment type="catalytic activity">
    <reaction evidence="1">
        <text>(2R)-2-phosphoglycerate = phosphoenolpyruvate + H2O</text>
        <dbReference type="Rhea" id="RHEA:10164"/>
        <dbReference type="ChEBI" id="CHEBI:15377"/>
        <dbReference type="ChEBI" id="CHEBI:58289"/>
        <dbReference type="ChEBI" id="CHEBI:58702"/>
        <dbReference type="EC" id="4.2.1.11"/>
    </reaction>
</comment>
<comment type="cofactor">
    <cofactor evidence="1">
        <name>Mg(2+)</name>
        <dbReference type="ChEBI" id="CHEBI:18420"/>
    </cofactor>
    <text evidence="1">Binds a second Mg(2+) ion via substrate during catalysis.</text>
</comment>
<comment type="pathway">
    <text evidence="1">Carbohydrate degradation; glycolysis; pyruvate from D-glyceraldehyde 3-phosphate: step 4/5.</text>
</comment>
<comment type="subcellular location">
    <subcellularLocation>
        <location evidence="1">Cytoplasm</location>
    </subcellularLocation>
    <subcellularLocation>
        <location evidence="1">Secreted</location>
    </subcellularLocation>
    <subcellularLocation>
        <location evidence="1">Cell surface</location>
    </subcellularLocation>
    <text evidence="1">Fractions of enolase are present in both the cytoplasm and on the cell surface.</text>
</comment>
<comment type="similarity">
    <text evidence="1">Belongs to the enolase family.</text>
</comment>
<feature type="chain" id="PRO_0000267057" description="Enolase">
    <location>
        <begin position="1"/>
        <end position="451"/>
    </location>
</feature>
<feature type="active site" description="Proton donor" evidence="1">
    <location>
        <position position="205"/>
    </location>
</feature>
<feature type="active site" description="Proton acceptor" evidence="1">
    <location>
        <position position="360"/>
    </location>
</feature>
<feature type="binding site" evidence="1">
    <location>
        <position position="163"/>
    </location>
    <ligand>
        <name>(2R)-2-phosphoglycerate</name>
        <dbReference type="ChEBI" id="CHEBI:58289"/>
    </ligand>
</feature>
<feature type="binding site" evidence="1">
    <location>
        <position position="258"/>
    </location>
    <ligand>
        <name>Mg(2+)</name>
        <dbReference type="ChEBI" id="CHEBI:18420"/>
    </ligand>
</feature>
<feature type="binding site" evidence="1">
    <location>
        <position position="308"/>
    </location>
    <ligand>
        <name>Mg(2+)</name>
        <dbReference type="ChEBI" id="CHEBI:18420"/>
    </ligand>
</feature>
<feature type="binding site" evidence="1">
    <location>
        <position position="335"/>
    </location>
    <ligand>
        <name>Mg(2+)</name>
        <dbReference type="ChEBI" id="CHEBI:18420"/>
    </ligand>
</feature>
<feature type="binding site" evidence="1">
    <location>
        <position position="360"/>
    </location>
    <ligand>
        <name>(2R)-2-phosphoglycerate</name>
        <dbReference type="ChEBI" id="CHEBI:58289"/>
    </ligand>
</feature>
<feature type="binding site" evidence="1">
    <location>
        <position position="389"/>
    </location>
    <ligand>
        <name>(2R)-2-phosphoglycerate</name>
        <dbReference type="ChEBI" id="CHEBI:58289"/>
    </ligand>
</feature>
<feature type="binding site" evidence="1">
    <location>
        <position position="390"/>
    </location>
    <ligand>
        <name>(2R)-2-phosphoglycerate</name>
        <dbReference type="ChEBI" id="CHEBI:58289"/>
    </ligand>
</feature>
<feature type="binding site" evidence="1">
    <location>
        <position position="411"/>
    </location>
    <ligand>
        <name>(2R)-2-phosphoglycerate</name>
        <dbReference type="ChEBI" id="CHEBI:58289"/>
    </ligand>
</feature>